<protein>
    <recommendedName>
        <fullName evidence="1">Arginine--tRNA ligase</fullName>
        <ecNumber evidence="1">6.1.1.19</ecNumber>
    </recommendedName>
    <alternativeName>
        <fullName evidence="1">Arginyl-tRNA synthetase</fullName>
        <shortName evidence="1">ArgRS</shortName>
    </alternativeName>
</protein>
<gene>
    <name evidence="1" type="primary">argS</name>
    <name type="ordered locus">KRH_09620</name>
</gene>
<accession>B2GLW8</accession>
<dbReference type="EC" id="6.1.1.19" evidence="1"/>
<dbReference type="EMBL" id="AP009152">
    <property type="protein sequence ID" value="BAG29309.1"/>
    <property type="molecule type" value="Genomic_DNA"/>
</dbReference>
<dbReference type="RefSeq" id="WP_012398030.1">
    <property type="nucleotide sequence ID" value="NC_010617.1"/>
</dbReference>
<dbReference type="SMR" id="B2GLW8"/>
<dbReference type="STRING" id="378753.KRH_09620"/>
<dbReference type="KEGG" id="krh:KRH_09620"/>
<dbReference type="eggNOG" id="COG0018">
    <property type="taxonomic scope" value="Bacteria"/>
</dbReference>
<dbReference type="HOGENOM" id="CLU_006406_0_1_11"/>
<dbReference type="OrthoDB" id="9803211at2"/>
<dbReference type="Proteomes" id="UP000008838">
    <property type="component" value="Chromosome"/>
</dbReference>
<dbReference type="GO" id="GO:0005737">
    <property type="term" value="C:cytoplasm"/>
    <property type="evidence" value="ECO:0007669"/>
    <property type="project" value="UniProtKB-SubCell"/>
</dbReference>
<dbReference type="GO" id="GO:0004814">
    <property type="term" value="F:arginine-tRNA ligase activity"/>
    <property type="evidence" value="ECO:0007669"/>
    <property type="project" value="UniProtKB-UniRule"/>
</dbReference>
<dbReference type="GO" id="GO:0005524">
    <property type="term" value="F:ATP binding"/>
    <property type="evidence" value="ECO:0007669"/>
    <property type="project" value="UniProtKB-UniRule"/>
</dbReference>
<dbReference type="GO" id="GO:0006420">
    <property type="term" value="P:arginyl-tRNA aminoacylation"/>
    <property type="evidence" value="ECO:0007669"/>
    <property type="project" value="UniProtKB-UniRule"/>
</dbReference>
<dbReference type="CDD" id="cd00671">
    <property type="entry name" value="ArgRS_core"/>
    <property type="match status" value="1"/>
</dbReference>
<dbReference type="FunFam" id="1.10.730.10:FF:000008">
    <property type="entry name" value="Arginine--tRNA ligase"/>
    <property type="match status" value="1"/>
</dbReference>
<dbReference type="FunFam" id="3.40.50.620:FF:000062">
    <property type="entry name" value="Arginine--tRNA ligase"/>
    <property type="match status" value="1"/>
</dbReference>
<dbReference type="Gene3D" id="3.30.1360.70">
    <property type="entry name" value="Arginyl tRNA synthetase N-terminal domain"/>
    <property type="match status" value="1"/>
</dbReference>
<dbReference type="Gene3D" id="3.40.50.620">
    <property type="entry name" value="HUPs"/>
    <property type="match status" value="1"/>
</dbReference>
<dbReference type="Gene3D" id="1.10.730.10">
    <property type="entry name" value="Isoleucyl-tRNA Synthetase, Domain 1"/>
    <property type="match status" value="1"/>
</dbReference>
<dbReference type="HAMAP" id="MF_00123">
    <property type="entry name" value="Arg_tRNA_synth"/>
    <property type="match status" value="1"/>
</dbReference>
<dbReference type="InterPro" id="IPR001412">
    <property type="entry name" value="aa-tRNA-synth_I_CS"/>
</dbReference>
<dbReference type="InterPro" id="IPR001278">
    <property type="entry name" value="Arg-tRNA-ligase"/>
</dbReference>
<dbReference type="InterPro" id="IPR005148">
    <property type="entry name" value="Arg-tRNA-synth_N"/>
</dbReference>
<dbReference type="InterPro" id="IPR036695">
    <property type="entry name" value="Arg-tRNA-synth_N_sf"/>
</dbReference>
<dbReference type="InterPro" id="IPR035684">
    <property type="entry name" value="ArgRS_core"/>
</dbReference>
<dbReference type="InterPro" id="IPR008909">
    <property type="entry name" value="DALR_anticod-bd"/>
</dbReference>
<dbReference type="InterPro" id="IPR014729">
    <property type="entry name" value="Rossmann-like_a/b/a_fold"/>
</dbReference>
<dbReference type="InterPro" id="IPR009080">
    <property type="entry name" value="tRNAsynth_Ia_anticodon-bd"/>
</dbReference>
<dbReference type="NCBIfam" id="TIGR00456">
    <property type="entry name" value="argS"/>
    <property type="match status" value="1"/>
</dbReference>
<dbReference type="PANTHER" id="PTHR11956:SF5">
    <property type="entry name" value="ARGININE--TRNA LIGASE, CYTOPLASMIC"/>
    <property type="match status" value="1"/>
</dbReference>
<dbReference type="PANTHER" id="PTHR11956">
    <property type="entry name" value="ARGINYL-TRNA SYNTHETASE"/>
    <property type="match status" value="1"/>
</dbReference>
<dbReference type="Pfam" id="PF03485">
    <property type="entry name" value="Arg_tRNA_synt_N"/>
    <property type="match status" value="1"/>
</dbReference>
<dbReference type="Pfam" id="PF05746">
    <property type="entry name" value="DALR_1"/>
    <property type="match status" value="1"/>
</dbReference>
<dbReference type="Pfam" id="PF00750">
    <property type="entry name" value="tRNA-synt_1d"/>
    <property type="match status" value="1"/>
</dbReference>
<dbReference type="PRINTS" id="PR01038">
    <property type="entry name" value="TRNASYNTHARG"/>
</dbReference>
<dbReference type="SMART" id="SM01016">
    <property type="entry name" value="Arg_tRNA_synt_N"/>
    <property type="match status" value="1"/>
</dbReference>
<dbReference type="SMART" id="SM00836">
    <property type="entry name" value="DALR_1"/>
    <property type="match status" value="1"/>
</dbReference>
<dbReference type="SUPFAM" id="SSF47323">
    <property type="entry name" value="Anticodon-binding domain of a subclass of class I aminoacyl-tRNA synthetases"/>
    <property type="match status" value="1"/>
</dbReference>
<dbReference type="SUPFAM" id="SSF55190">
    <property type="entry name" value="Arginyl-tRNA synthetase (ArgRS), N-terminal 'additional' domain"/>
    <property type="match status" value="1"/>
</dbReference>
<dbReference type="SUPFAM" id="SSF52374">
    <property type="entry name" value="Nucleotidylyl transferase"/>
    <property type="match status" value="1"/>
</dbReference>
<dbReference type="PROSITE" id="PS00178">
    <property type="entry name" value="AA_TRNA_LIGASE_I"/>
    <property type="match status" value="1"/>
</dbReference>
<feature type="chain" id="PRO_1000095373" description="Arginine--tRNA ligase">
    <location>
        <begin position="1"/>
        <end position="556"/>
    </location>
</feature>
<feature type="short sequence motif" description="'HIGH' region">
    <location>
        <begin position="132"/>
        <end position="142"/>
    </location>
</feature>
<reference key="1">
    <citation type="journal article" date="2008" name="J. Bacteriol.">
        <title>Complete genome sequence of the soil actinomycete Kocuria rhizophila.</title>
        <authorList>
            <person name="Takarada H."/>
            <person name="Sekine M."/>
            <person name="Kosugi H."/>
            <person name="Matsuo Y."/>
            <person name="Fujisawa T."/>
            <person name="Omata S."/>
            <person name="Kishi E."/>
            <person name="Shimizu A."/>
            <person name="Tsukatani N."/>
            <person name="Tanikawa S."/>
            <person name="Fujita N."/>
            <person name="Harayama S."/>
        </authorList>
    </citation>
    <scope>NUCLEOTIDE SEQUENCE [LARGE SCALE GENOMIC DNA]</scope>
    <source>
        <strain>ATCC 9341 / DSM 348 / NBRC 103217 / DC2201</strain>
    </source>
</reference>
<comment type="catalytic activity">
    <reaction evidence="1">
        <text>tRNA(Arg) + L-arginine + ATP = L-arginyl-tRNA(Arg) + AMP + diphosphate</text>
        <dbReference type="Rhea" id="RHEA:20301"/>
        <dbReference type="Rhea" id="RHEA-COMP:9658"/>
        <dbReference type="Rhea" id="RHEA-COMP:9673"/>
        <dbReference type="ChEBI" id="CHEBI:30616"/>
        <dbReference type="ChEBI" id="CHEBI:32682"/>
        <dbReference type="ChEBI" id="CHEBI:33019"/>
        <dbReference type="ChEBI" id="CHEBI:78442"/>
        <dbReference type="ChEBI" id="CHEBI:78513"/>
        <dbReference type="ChEBI" id="CHEBI:456215"/>
        <dbReference type="EC" id="6.1.1.19"/>
    </reaction>
</comment>
<comment type="subunit">
    <text evidence="1">Monomer.</text>
</comment>
<comment type="subcellular location">
    <subcellularLocation>
        <location evidence="1">Cytoplasm</location>
    </subcellularLocation>
</comment>
<comment type="similarity">
    <text evidence="1">Belongs to the class-I aminoacyl-tRNA synthetase family.</text>
</comment>
<keyword id="KW-0030">Aminoacyl-tRNA synthetase</keyword>
<keyword id="KW-0067">ATP-binding</keyword>
<keyword id="KW-0963">Cytoplasm</keyword>
<keyword id="KW-0436">Ligase</keyword>
<keyword id="KW-0547">Nucleotide-binding</keyword>
<keyword id="KW-0648">Protein biosynthesis</keyword>
<keyword id="KW-1185">Reference proteome</keyword>
<organism>
    <name type="scientific">Kocuria rhizophila (strain ATCC 9341 / DSM 348 / NBRC 103217 / DC2201)</name>
    <dbReference type="NCBI Taxonomy" id="378753"/>
    <lineage>
        <taxon>Bacteria</taxon>
        <taxon>Bacillati</taxon>
        <taxon>Actinomycetota</taxon>
        <taxon>Actinomycetes</taxon>
        <taxon>Micrococcales</taxon>
        <taxon>Micrococcaceae</taxon>
        <taxon>Kocuria</taxon>
    </lineage>
</organism>
<sequence length="556" mass="60057">MTPEELSSAVSACLQDAVAAGELTVVDGVDLPEAKVERPKNRDHGDWATTVAMQVAKKVGRSPRDVAQILSERLARVPGVKTVDIAGPGFLNITLDAAAAGGLAQSVVEQGSAFGTGDALAGTTINLEFVSANPTGPIHLGGTRWAAVGDSLARVLQAQGAEVVREYYFNDHGNQIDRFARSLLARARGEAAPEDGYGGQYISDVAQEVLALHPDALESEDPQEVFRAAGVELMFAQIKSSLHEFGVDFDVFFHENSLFEDGQVEKLLEQLRSSDSLYFADGAWWLRSTEHGDDKDRVVIKSDGNAAYIAGDIAYFKNKRDRGADLCIYMLGADHHGYVARLKAAAAALGDSPDAVEVLIGQMVNLVRDGEAVRMSKRAGTVVTMEDLVEVVGVDAARYSLTRYSVDSNIDIDLDVLTRRSNENPVFYVQYAHARTCAVARNAEAAGVRRTDDAGAPQFDAALLSHPREADLLAALGQYPSVVAQAADFREPHRVARHLEALAGAYHRWYDACRVTPQGDGEVELVHHTRLWLNDAVRQVLANGLDLLGVSAPERM</sequence>
<evidence type="ECO:0000255" key="1">
    <source>
        <dbReference type="HAMAP-Rule" id="MF_00123"/>
    </source>
</evidence>
<name>SYR_KOCRD</name>
<proteinExistence type="inferred from homology"/>